<sequence>MTSPSDFPTPPVPGRLLDVEDVTVFRGDRLVLDGVSLTLDAGDAMILTGPNGAGKSTLLRTISGLRRPDSGEVIRYGDLAWLGHQDALKPGLTLAQNLALAEKLGTNSLSDALEALDLTHLTDLPARLLSSGQKRRAAFARVMLSGALLWLLDEPTVGLDVASIERLGAVMAAHRAKGGAMIVTTHVPLPLDNTRSHELPSLAHVESFWLS</sequence>
<comment type="function">
    <text evidence="1">Part of the ABC transporter complex CcmAB involved in the biogenesis of c-type cytochromes; once thought to export heme, this seems not to be the case, but its exact role is uncertain. Responsible for energy coupling to the transport system.</text>
</comment>
<comment type="catalytic activity">
    <reaction evidence="1">
        <text>heme b(in) + ATP + H2O = heme b(out) + ADP + phosphate + H(+)</text>
        <dbReference type="Rhea" id="RHEA:19261"/>
        <dbReference type="ChEBI" id="CHEBI:15377"/>
        <dbReference type="ChEBI" id="CHEBI:15378"/>
        <dbReference type="ChEBI" id="CHEBI:30616"/>
        <dbReference type="ChEBI" id="CHEBI:43474"/>
        <dbReference type="ChEBI" id="CHEBI:60344"/>
        <dbReference type="ChEBI" id="CHEBI:456216"/>
        <dbReference type="EC" id="7.6.2.5"/>
    </reaction>
</comment>
<comment type="subunit">
    <text evidence="1">The complex is composed of two ATP-binding proteins (CcmA) and two transmembrane proteins (CcmB).</text>
</comment>
<comment type="subcellular location">
    <subcellularLocation>
        <location evidence="1">Cell inner membrane</location>
        <topology evidence="1">Peripheral membrane protein</topology>
    </subcellularLocation>
</comment>
<comment type="similarity">
    <text evidence="1">Belongs to the ABC transporter superfamily. CcmA exporter (TC 3.A.1.107) family.</text>
</comment>
<proteinExistence type="inferred from homology"/>
<feature type="chain" id="PRO_0000271924" description="Cytochrome c biogenesis ATP-binding export protein CcmA">
    <location>
        <begin position="1"/>
        <end position="211"/>
    </location>
</feature>
<feature type="domain" description="ABC transporter" evidence="1">
    <location>
        <begin position="17"/>
        <end position="209"/>
    </location>
</feature>
<feature type="binding site" evidence="1">
    <location>
        <begin position="49"/>
        <end position="56"/>
    </location>
    <ligand>
        <name>ATP</name>
        <dbReference type="ChEBI" id="CHEBI:30616"/>
    </ligand>
</feature>
<gene>
    <name evidence="1" type="primary">ccmA</name>
    <name type="ordered locus">GOX1571</name>
</gene>
<protein>
    <recommendedName>
        <fullName evidence="1">Cytochrome c biogenesis ATP-binding export protein CcmA</fullName>
        <ecNumber evidence="1">7.6.2.5</ecNumber>
    </recommendedName>
    <alternativeName>
        <fullName evidence="1">Heme exporter protein A</fullName>
    </alternativeName>
</protein>
<evidence type="ECO:0000255" key="1">
    <source>
        <dbReference type="HAMAP-Rule" id="MF_01707"/>
    </source>
</evidence>
<name>CCMA_GLUOX</name>
<reference key="1">
    <citation type="journal article" date="2005" name="Nat. Biotechnol.">
        <title>Complete genome sequence of the acetic acid bacterium Gluconobacter oxydans.</title>
        <authorList>
            <person name="Prust C."/>
            <person name="Hoffmeister M."/>
            <person name="Liesegang H."/>
            <person name="Wiezer A."/>
            <person name="Fricke W.F."/>
            <person name="Ehrenreich A."/>
            <person name="Gottschalk G."/>
            <person name="Deppenmeier U."/>
        </authorList>
    </citation>
    <scope>NUCLEOTIDE SEQUENCE [LARGE SCALE GENOMIC DNA]</scope>
    <source>
        <strain>621H</strain>
    </source>
</reference>
<accession>Q5FQN4</accession>
<dbReference type="EC" id="7.6.2.5" evidence="1"/>
<dbReference type="EMBL" id="CP000009">
    <property type="protein sequence ID" value="AAW61312.1"/>
    <property type="molecule type" value="Genomic_DNA"/>
</dbReference>
<dbReference type="RefSeq" id="WP_011253096.1">
    <property type="nucleotide sequence ID" value="NC_006677.1"/>
</dbReference>
<dbReference type="SMR" id="Q5FQN4"/>
<dbReference type="STRING" id="290633.GOX1571"/>
<dbReference type="KEGG" id="gox:GOX1571"/>
<dbReference type="eggNOG" id="COG4133">
    <property type="taxonomic scope" value="Bacteria"/>
</dbReference>
<dbReference type="HOGENOM" id="CLU_000604_1_2_5"/>
<dbReference type="Proteomes" id="UP000006375">
    <property type="component" value="Chromosome"/>
</dbReference>
<dbReference type="GO" id="GO:0005886">
    <property type="term" value="C:plasma membrane"/>
    <property type="evidence" value="ECO:0007669"/>
    <property type="project" value="UniProtKB-SubCell"/>
</dbReference>
<dbReference type="GO" id="GO:0015439">
    <property type="term" value="F:ABC-type heme transporter activity"/>
    <property type="evidence" value="ECO:0007669"/>
    <property type="project" value="UniProtKB-EC"/>
</dbReference>
<dbReference type="GO" id="GO:0005524">
    <property type="term" value="F:ATP binding"/>
    <property type="evidence" value="ECO:0007669"/>
    <property type="project" value="UniProtKB-KW"/>
</dbReference>
<dbReference type="GO" id="GO:0016887">
    <property type="term" value="F:ATP hydrolysis activity"/>
    <property type="evidence" value="ECO:0007669"/>
    <property type="project" value="InterPro"/>
</dbReference>
<dbReference type="GO" id="GO:0017004">
    <property type="term" value="P:cytochrome complex assembly"/>
    <property type="evidence" value="ECO:0007669"/>
    <property type="project" value="UniProtKB-KW"/>
</dbReference>
<dbReference type="Gene3D" id="3.40.50.300">
    <property type="entry name" value="P-loop containing nucleotide triphosphate hydrolases"/>
    <property type="match status" value="1"/>
</dbReference>
<dbReference type="InterPro" id="IPR003593">
    <property type="entry name" value="AAA+_ATPase"/>
</dbReference>
<dbReference type="InterPro" id="IPR003439">
    <property type="entry name" value="ABC_transporter-like_ATP-bd"/>
</dbReference>
<dbReference type="InterPro" id="IPR017871">
    <property type="entry name" value="ABC_transporter-like_CS"/>
</dbReference>
<dbReference type="InterPro" id="IPR005895">
    <property type="entry name" value="ABC_transptr_haem_export_CcmA"/>
</dbReference>
<dbReference type="InterPro" id="IPR027417">
    <property type="entry name" value="P-loop_NTPase"/>
</dbReference>
<dbReference type="NCBIfam" id="TIGR01189">
    <property type="entry name" value="ccmA"/>
    <property type="match status" value="1"/>
</dbReference>
<dbReference type="PANTHER" id="PTHR43499">
    <property type="entry name" value="ABC TRANSPORTER I FAMILY MEMBER 1"/>
    <property type="match status" value="1"/>
</dbReference>
<dbReference type="PANTHER" id="PTHR43499:SF1">
    <property type="entry name" value="ABC TRANSPORTER I FAMILY MEMBER 1"/>
    <property type="match status" value="1"/>
</dbReference>
<dbReference type="Pfam" id="PF00005">
    <property type="entry name" value="ABC_tran"/>
    <property type="match status" value="1"/>
</dbReference>
<dbReference type="SMART" id="SM00382">
    <property type="entry name" value="AAA"/>
    <property type="match status" value="1"/>
</dbReference>
<dbReference type="SUPFAM" id="SSF52540">
    <property type="entry name" value="P-loop containing nucleoside triphosphate hydrolases"/>
    <property type="match status" value="1"/>
</dbReference>
<dbReference type="PROSITE" id="PS00211">
    <property type="entry name" value="ABC_TRANSPORTER_1"/>
    <property type="match status" value="1"/>
</dbReference>
<dbReference type="PROSITE" id="PS50893">
    <property type="entry name" value="ABC_TRANSPORTER_2"/>
    <property type="match status" value="1"/>
</dbReference>
<dbReference type="PROSITE" id="PS51243">
    <property type="entry name" value="CCMA"/>
    <property type="match status" value="1"/>
</dbReference>
<keyword id="KW-0067">ATP-binding</keyword>
<keyword id="KW-0997">Cell inner membrane</keyword>
<keyword id="KW-1003">Cell membrane</keyword>
<keyword id="KW-0201">Cytochrome c-type biogenesis</keyword>
<keyword id="KW-0472">Membrane</keyword>
<keyword id="KW-0547">Nucleotide-binding</keyword>
<keyword id="KW-1185">Reference proteome</keyword>
<keyword id="KW-1278">Translocase</keyword>
<keyword id="KW-0813">Transport</keyword>
<organism>
    <name type="scientific">Gluconobacter oxydans (strain 621H)</name>
    <name type="common">Gluconobacter suboxydans</name>
    <dbReference type="NCBI Taxonomy" id="290633"/>
    <lineage>
        <taxon>Bacteria</taxon>
        <taxon>Pseudomonadati</taxon>
        <taxon>Pseudomonadota</taxon>
        <taxon>Alphaproteobacteria</taxon>
        <taxon>Acetobacterales</taxon>
        <taxon>Acetobacteraceae</taxon>
        <taxon>Gluconobacter</taxon>
    </lineage>
</organism>